<proteinExistence type="inferred from homology"/>
<name>CRTM_STAAM</name>
<feature type="chain" id="PRO_0000282620" description="4,4'-diapophytoene synthase">
    <location>
        <begin position="1"/>
        <end position="287"/>
    </location>
</feature>
<feature type="binding site" evidence="1">
    <location>
        <begin position="18"/>
        <end position="21"/>
    </location>
    <ligand>
        <name>(2E,6E)-farnesyl diphosphate</name>
        <dbReference type="ChEBI" id="CHEBI:175763"/>
        <label>1</label>
    </ligand>
</feature>
<feature type="binding site" evidence="1">
    <location>
        <position position="41"/>
    </location>
    <ligand>
        <name>(2E,6E)-farnesyl diphosphate</name>
        <dbReference type="ChEBI" id="CHEBI:175763"/>
        <label>1</label>
    </ligand>
</feature>
<feature type="binding site" evidence="1">
    <location>
        <position position="45"/>
    </location>
    <ligand>
        <name>(2E,6E)-farnesyl diphosphate</name>
        <dbReference type="ChEBI" id="CHEBI:175763"/>
        <label>1</label>
    </ligand>
</feature>
<feature type="binding site" evidence="1">
    <location>
        <position position="45"/>
    </location>
    <ligand>
        <name>(2E,6E)-farnesyl diphosphate</name>
        <dbReference type="ChEBI" id="CHEBI:175763"/>
        <label>2</label>
    </ligand>
</feature>
<feature type="binding site" evidence="1">
    <location>
        <position position="48"/>
    </location>
    <ligand>
        <name>Mg(2+)</name>
        <dbReference type="ChEBI" id="CHEBI:18420"/>
        <label>1</label>
    </ligand>
</feature>
<feature type="binding site" evidence="1">
    <location>
        <position position="52"/>
    </location>
    <ligand>
        <name>Mg(2+)</name>
        <dbReference type="ChEBI" id="CHEBI:18420"/>
        <label>1</label>
    </ligand>
</feature>
<feature type="binding site" evidence="1">
    <location>
        <position position="165"/>
    </location>
    <ligand>
        <name>(2E,6E)-farnesyl diphosphate</name>
        <dbReference type="ChEBI" id="CHEBI:175763"/>
        <label>2</label>
    </ligand>
</feature>
<feature type="binding site" evidence="1">
    <location>
        <position position="168"/>
    </location>
    <ligand>
        <name>Mg(2+)</name>
        <dbReference type="ChEBI" id="CHEBI:18420"/>
        <label>2</label>
    </ligand>
</feature>
<feature type="binding site" evidence="1">
    <location>
        <position position="171"/>
    </location>
    <ligand>
        <name>(2E,6E)-farnesyl diphosphate</name>
        <dbReference type="ChEBI" id="CHEBI:175763"/>
        <label>1</label>
    </ligand>
</feature>
<feature type="binding site" evidence="1">
    <location>
        <position position="172"/>
    </location>
    <ligand>
        <name>Mg(2+)</name>
        <dbReference type="ChEBI" id="CHEBI:18420"/>
        <label>2</label>
    </ligand>
</feature>
<feature type="binding site" evidence="1">
    <location>
        <position position="248"/>
    </location>
    <ligand>
        <name>(2E,6E)-farnesyl diphosphate</name>
        <dbReference type="ChEBI" id="CHEBI:175763"/>
        <label>1</label>
    </ligand>
</feature>
<reference key="1">
    <citation type="journal article" date="2001" name="Lancet">
        <title>Whole genome sequencing of meticillin-resistant Staphylococcus aureus.</title>
        <authorList>
            <person name="Kuroda M."/>
            <person name="Ohta T."/>
            <person name="Uchiyama I."/>
            <person name="Baba T."/>
            <person name="Yuzawa H."/>
            <person name="Kobayashi I."/>
            <person name="Cui L."/>
            <person name="Oguchi A."/>
            <person name="Aoki K."/>
            <person name="Nagai Y."/>
            <person name="Lian J.-Q."/>
            <person name="Ito T."/>
            <person name="Kanamori M."/>
            <person name="Matsumaru H."/>
            <person name="Maruyama A."/>
            <person name="Murakami H."/>
            <person name="Hosoyama A."/>
            <person name="Mizutani-Ui Y."/>
            <person name="Takahashi N.K."/>
            <person name="Sawano T."/>
            <person name="Inoue R."/>
            <person name="Kaito C."/>
            <person name="Sekimizu K."/>
            <person name="Hirakawa H."/>
            <person name="Kuhara S."/>
            <person name="Goto S."/>
            <person name="Yabuzaki J."/>
            <person name="Kanehisa M."/>
            <person name="Yamashita A."/>
            <person name="Oshima K."/>
            <person name="Furuya K."/>
            <person name="Yoshino C."/>
            <person name="Shiba T."/>
            <person name="Hattori M."/>
            <person name="Ogasawara N."/>
            <person name="Hayashi H."/>
            <person name="Hiramatsu K."/>
        </authorList>
    </citation>
    <scope>NUCLEOTIDE SEQUENCE [LARGE SCALE GENOMIC DNA]</scope>
    <source>
        <strain>Mu50 / ATCC 700699</strain>
    </source>
</reference>
<protein>
    <recommendedName>
        <fullName evidence="2">4,4'-diapophytoene synthase</fullName>
        <shortName evidence="2">DAP synthase</shortName>
        <ecNumber evidence="2">2.5.1.96</ecNumber>
    </recommendedName>
    <alternativeName>
        <fullName evidence="2">C30 carotenoid synthase</fullName>
    </alternativeName>
    <alternativeName>
        <fullName evidence="2">Dehydrosqualene synthase</fullName>
    </alternativeName>
</protein>
<comment type="function">
    <text evidence="2">Involved in the biosynthesis of the yellow-orange carotenoid staphyloxanthin, which plays a role in the virulence via its protective function against oxidative stress. Catalyzes the head-to-head condensation of two molecules of farnesyl diphosphate (FPP) into the colorless C(30) carotenoid 4,4'-diapophytoene (dehydrosqualene).</text>
</comment>
<comment type="catalytic activity">
    <reaction evidence="2">
        <text>2 (2E,6E)-farnesyl diphosphate = 15-cis-4,4'-diapophytoene + 2 diphosphate</text>
        <dbReference type="Rhea" id="RHEA:31547"/>
        <dbReference type="ChEBI" id="CHEBI:33019"/>
        <dbReference type="ChEBI" id="CHEBI:62738"/>
        <dbReference type="ChEBI" id="CHEBI:175763"/>
        <dbReference type="EC" id="2.5.1.96"/>
    </reaction>
</comment>
<comment type="cofactor">
    <cofactor evidence="1">
        <name>Mg(2+)</name>
        <dbReference type="ChEBI" id="CHEBI:18420"/>
    </cofactor>
    <text evidence="1">Binds 2 Mg(2+) ions per subunit.</text>
</comment>
<comment type="pathway">
    <text evidence="2">Carotenoid biosynthesis; staphyloxanthin biosynthesis; staphyloxanthin from farnesyl diphosphate: step 1/5.</text>
</comment>
<comment type="similarity">
    <text evidence="3">Belongs to the phytoene/squalene synthase family. CrtM subfamily.</text>
</comment>
<dbReference type="EC" id="2.5.1.96" evidence="2"/>
<dbReference type="EMBL" id="BA000017">
    <property type="protein sequence ID" value="BAB58724.1"/>
    <property type="molecule type" value="Genomic_DNA"/>
</dbReference>
<dbReference type="RefSeq" id="WP_000178308.1">
    <property type="nucleotide sequence ID" value="NC_002758.2"/>
</dbReference>
<dbReference type="SMR" id="Q99R75"/>
<dbReference type="KEGG" id="sav:SAV2562"/>
<dbReference type="HOGENOM" id="CLU_037269_1_3_9"/>
<dbReference type="PhylomeDB" id="Q99R75"/>
<dbReference type="UniPathway" id="UPA00029">
    <property type="reaction ID" value="UER00556"/>
</dbReference>
<dbReference type="Proteomes" id="UP000002481">
    <property type="component" value="Chromosome"/>
</dbReference>
<dbReference type="GO" id="GO:0004311">
    <property type="term" value="F:geranylgeranyl diphosphate synthase activity"/>
    <property type="evidence" value="ECO:0007669"/>
    <property type="project" value="InterPro"/>
</dbReference>
<dbReference type="GO" id="GO:0046872">
    <property type="term" value="F:metal ion binding"/>
    <property type="evidence" value="ECO:0007669"/>
    <property type="project" value="UniProtKB-KW"/>
</dbReference>
<dbReference type="GO" id="GO:0051996">
    <property type="term" value="F:squalene synthase [NAD(P)H] activity"/>
    <property type="evidence" value="ECO:0007669"/>
    <property type="project" value="InterPro"/>
</dbReference>
<dbReference type="GO" id="GO:0016117">
    <property type="term" value="P:carotenoid biosynthetic process"/>
    <property type="evidence" value="ECO:0007669"/>
    <property type="project" value="UniProtKB-KW"/>
</dbReference>
<dbReference type="CDD" id="cd00683">
    <property type="entry name" value="Trans_IPPS_HH"/>
    <property type="match status" value="1"/>
</dbReference>
<dbReference type="FunFam" id="1.10.600.10:FF:000028">
    <property type="entry name" value="Dehydrosqualene synthase"/>
    <property type="match status" value="1"/>
</dbReference>
<dbReference type="Gene3D" id="1.10.600.10">
    <property type="entry name" value="Farnesyl Diphosphate Synthase"/>
    <property type="match status" value="1"/>
</dbReference>
<dbReference type="InterPro" id="IPR008949">
    <property type="entry name" value="Isoprenoid_synthase_dom_sf"/>
</dbReference>
<dbReference type="InterPro" id="IPR002060">
    <property type="entry name" value="Squ/phyt_synthse"/>
</dbReference>
<dbReference type="InterPro" id="IPR019845">
    <property type="entry name" value="Squalene/phytoene_synthase_CS"/>
</dbReference>
<dbReference type="InterPro" id="IPR044843">
    <property type="entry name" value="Trans_IPPS_bact-type"/>
</dbReference>
<dbReference type="InterPro" id="IPR033904">
    <property type="entry name" value="Trans_IPPS_HH"/>
</dbReference>
<dbReference type="PANTHER" id="PTHR31480">
    <property type="entry name" value="BIFUNCTIONAL LYCOPENE CYCLASE/PHYTOENE SYNTHASE"/>
    <property type="match status" value="1"/>
</dbReference>
<dbReference type="Pfam" id="PF00494">
    <property type="entry name" value="SQS_PSY"/>
    <property type="match status" value="1"/>
</dbReference>
<dbReference type="SFLD" id="SFLDG01212">
    <property type="entry name" value="Phytoene_synthase_like"/>
    <property type="match status" value="1"/>
</dbReference>
<dbReference type="SFLD" id="SFLDG01018">
    <property type="entry name" value="Squalene/Phytoene_Synthase_Lik"/>
    <property type="match status" value="1"/>
</dbReference>
<dbReference type="SUPFAM" id="SSF48576">
    <property type="entry name" value="Terpenoid synthases"/>
    <property type="match status" value="1"/>
</dbReference>
<dbReference type="PROSITE" id="PS01044">
    <property type="entry name" value="SQUALEN_PHYTOEN_SYN_1"/>
    <property type="match status" value="1"/>
</dbReference>
<keyword id="KW-0125">Carotenoid biosynthesis</keyword>
<keyword id="KW-0460">Magnesium</keyword>
<keyword id="KW-0479">Metal-binding</keyword>
<keyword id="KW-0808">Transferase</keyword>
<keyword id="KW-0843">Virulence</keyword>
<accession>Q99R75</accession>
<sequence length="287" mass="34217">MTMMDMNFKYCHKIMKKHSKSFSYAFDLLPEDQRKAVWAIYAVCRKIDDSIDVYGDIQFLNQIKEDIQSIEKYPYEHHHFQSDRRIMMALQHVAQHKNIAFQSFYNLIDTVYKDQHFTMFETDAELFGYCYGVAGTVGEVLTPILSDHETHQTYDVARRLGESLQLINILRDVGEDFDNERVYFSKQRLKQYEVDIAEVYQNGVNNHYIDLWEYYAAIAEKDFQDVMDQIKVFSIEAQPIIELAARIYIEILDEVRQANYTLHERVFVDKRKKAKLFHEINSKYHRI</sequence>
<organism>
    <name type="scientific">Staphylococcus aureus (strain Mu50 / ATCC 700699)</name>
    <dbReference type="NCBI Taxonomy" id="158878"/>
    <lineage>
        <taxon>Bacteria</taxon>
        <taxon>Bacillati</taxon>
        <taxon>Bacillota</taxon>
        <taxon>Bacilli</taxon>
        <taxon>Bacillales</taxon>
        <taxon>Staphylococcaceae</taxon>
        <taxon>Staphylococcus</taxon>
    </lineage>
</organism>
<evidence type="ECO:0000250" key="1">
    <source>
        <dbReference type="UniProtKB" id="A9JQL9"/>
    </source>
</evidence>
<evidence type="ECO:0000250" key="2">
    <source>
        <dbReference type="UniProtKB" id="Q2FV59"/>
    </source>
</evidence>
<evidence type="ECO:0000305" key="3"/>
<gene>
    <name type="primary">crtM</name>
    <name type="ordered locus">SAV2562</name>
</gene>